<feature type="chain" id="PRO_0000096679" description="Putative ATPase N2B">
    <location>
        <begin position="1"/>
        <end position="464"/>
    </location>
</feature>
<feature type="binding site" evidence="1">
    <location>
        <begin position="117"/>
        <end position="124"/>
    </location>
    <ligand>
        <name>ATP</name>
        <dbReference type="ChEBI" id="CHEBI:30616"/>
    </ligand>
</feature>
<name>N2B_HAEIR</name>
<evidence type="ECO:0000255" key="1"/>
<evidence type="ECO:0000305" key="2"/>
<proteinExistence type="evidence at transcript level"/>
<sequence>MLSPKVLVRLVDSQQQILLLSSALCSPQQLSRRFLTPMQAYEQRIESKELLPDKVQKKTTQELEDLYNTLKNYQPKPVRVETSSGGGFFGRFMKKEQSAPKIELLNTTAPKGMYIYGSVGGGKTTLMDMFYSCCDDIPKKQRVHFNSFMSKVHGLIHKVKQERGPQDRAFNSEKPLPFDPTLPVAEMIANESWLICFDEFQVTDIADAMILKSLFTHLFNEGIVCIATSNRHPNDLYKNGLQRSNFIPFIGVLLNRCNVAAMDSGVDYRRIAQSGDTNYFVTTQTDAKSQMERMFKILCSQENDIIRPRTITHFGRDLTFQRTCGQVLDSNFEELCNRPLGGSDYIQIGQFFHTVLIHDVPQLTLLLKSQMRRFITLIDTLYDNRVRVVISAEVPLDQLFSFTDKPKDLADEQRMLMDDLKLGDTDTSASVFTGEEEMFAFDRTISRLYEMQKKEYWEQWAKHR</sequence>
<reference key="1">
    <citation type="journal article" date="1995" name="J. Med. Entomol.">
        <title>Cloning, sequencing, and characterization of a complementary DNA from Haematobia irritans irritans (Diptera: Muscidae) that shares significant homology to a yeast ATPase.</title>
        <authorList>
            <person name="Guerrero F.D."/>
        </authorList>
    </citation>
    <scope>NUCLEOTIDE SEQUENCE [MRNA]</scope>
</reference>
<comment type="similarity">
    <text evidence="2">Belongs to the AFG1 ATPase family.</text>
</comment>
<protein>
    <recommendedName>
        <fullName>Putative ATPase N2B</fullName>
    </recommendedName>
    <alternativeName>
        <fullName>HFN2B</fullName>
    </alternativeName>
</protein>
<dbReference type="EMBL" id="U12392">
    <property type="protein sequence ID" value="AAA91360.1"/>
    <property type="molecule type" value="mRNA"/>
</dbReference>
<dbReference type="GO" id="GO:0005739">
    <property type="term" value="C:mitochondrion"/>
    <property type="evidence" value="ECO:0007669"/>
    <property type="project" value="TreeGrafter"/>
</dbReference>
<dbReference type="GO" id="GO:0005524">
    <property type="term" value="F:ATP binding"/>
    <property type="evidence" value="ECO:0007669"/>
    <property type="project" value="UniProtKB-KW"/>
</dbReference>
<dbReference type="GO" id="GO:0016887">
    <property type="term" value="F:ATP hydrolysis activity"/>
    <property type="evidence" value="ECO:0007669"/>
    <property type="project" value="InterPro"/>
</dbReference>
<dbReference type="FunFam" id="3.40.50.300:FF:003045">
    <property type="entry name" value="GD10885"/>
    <property type="match status" value="1"/>
</dbReference>
<dbReference type="Gene3D" id="3.40.50.300">
    <property type="entry name" value="P-loop containing nucleotide triphosphate hydrolases"/>
    <property type="match status" value="1"/>
</dbReference>
<dbReference type="InterPro" id="IPR005654">
    <property type="entry name" value="ATPase_AFG1-like"/>
</dbReference>
<dbReference type="InterPro" id="IPR027417">
    <property type="entry name" value="P-loop_NTPase"/>
</dbReference>
<dbReference type="NCBIfam" id="NF040713">
    <property type="entry name" value="ZapE"/>
    <property type="match status" value="1"/>
</dbReference>
<dbReference type="PANTHER" id="PTHR12169:SF6">
    <property type="entry name" value="AFG1-LIKE ATPASE"/>
    <property type="match status" value="1"/>
</dbReference>
<dbReference type="PANTHER" id="PTHR12169">
    <property type="entry name" value="ATPASE N2B"/>
    <property type="match status" value="1"/>
</dbReference>
<dbReference type="Pfam" id="PF03969">
    <property type="entry name" value="AFG1_ATPase"/>
    <property type="match status" value="1"/>
</dbReference>
<dbReference type="SUPFAM" id="SSF52540">
    <property type="entry name" value="P-loop containing nucleoside triphosphate hydrolases"/>
    <property type="match status" value="1"/>
</dbReference>
<keyword id="KW-0067">ATP-binding</keyword>
<keyword id="KW-0547">Nucleotide-binding</keyword>
<organism>
    <name type="scientific">Haematobia irritans</name>
    <name type="common">Horn fly</name>
    <name type="synonym">Conops irritans</name>
    <dbReference type="NCBI Taxonomy" id="7368"/>
    <lineage>
        <taxon>Eukaryota</taxon>
        <taxon>Metazoa</taxon>
        <taxon>Ecdysozoa</taxon>
        <taxon>Arthropoda</taxon>
        <taxon>Hexapoda</taxon>
        <taxon>Insecta</taxon>
        <taxon>Pterygota</taxon>
        <taxon>Neoptera</taxon>
        <taxon>Endopterygota</taxon>
        <taxon>Diptera</taxon>
        <taxon>Brachycera</taxon>
        <taxon>Muscomorpha</taxon>
        <taxon>Muscoidea</taxon>
        <taxon>Muscidae</taxon>
        <taxon>Haematobia</taxon>
    </lineage>
</organism>
<accession>P46441</accession>